<organism>
    <name type="scientific">Gossypium hirsutum</name>
    <name type="common">Upland cotton</name>
    <name type="synonym">Gossypium mexicanum</name>
    <dbReference type="NCBI Taxonomy" id="3635"/>
    <lineage>
        <taxon>Eukaryota</taxon>
        <taxon>Viridiplantae</taxon>
        <taxon>Streptophyta</taxon>
        <taxon>Embryophyta</taxon>
        <taxon>Tracheophyta</taxon>
        <taxon>Spermatophyta</taxon>
        <taxon>Magnoliopsida</taxon>
        <taxon>eudicotyledons</taxon>
        <taxon>Gunneridae</taxon>
        <taxon>Pentapetalae</taxon>
        <taxon>rosids</taxon>
        <taxon>malvids</taxon>
        <taxon>Malvales</taxon>
        <taxon>Malvaceae</taxon>
        <taxon>Malvoideae</taxon>
        <taxon>Gossypium</taxon>
    </lineage>
</organism>
<protein>
    <recommendedName>
        <fullName>Late embryogenesis abundant protein D-19</fullName>
        <shortName>LEA D-19</shortName>
    </recommendedName>
</protein>
<keyword id="KW-1185">Reference proteome</keyword>
<proteinExistence type="evidence at transcript level"/>
<feature type="chain" id="PRO_0000185679" description="Late embryogenesis abundant protein D-19">
    <location>
        <begin position="1"/>
        <end position="102"/>
    </location>
</feature>
<feature type="region of interest" description="Disordered" evidence="1">
    <location>
        <begin position="1"/>
        <end position="102"/>
    </location>
</feature>
<feature type="compositionally biased region" description="Basic and acidic residues" evidence="1">
    <location>
        <begin position="48"/>
        <end position="58"/>
    </location>
</feature>
<dbReference type="EMBL" id="M19387">
    <property type="protein sequence ID" value="AAA92729.1"/>
    <property type="status" value="ALT_SEQ"/>
    <property type="molecule type" value="mRNA"/>
</dbReference>
<dbReference type="EMBL" id="X13205">
    <property type="protein sequence ID" value="CAA31593.1"/>
    <property type="molecule type" value="Genomic_DNA"/>
</dbReference>
<dbReference type="EMBL" id="M73751">
    <property type="protein sequence ID" value="AAA33062.1"/>
    <property type="molecule type" value="mRNA"/>
</dbReference>
<dbReference type="EMBL" id="M73752">
    <property type="protein sequence ID" value="AAA33060.1"/>
    <property type="molecule type" value="Genomic_DNA"/>
</dbReference>
<dbReference type="PIR" id="S19225">
    <property type="entry name" value="S19225"/>
</dbReference>
<dbReference type="RefSeq" id="XP_016719188.1">
    <property type="nucleotide sequence ID" value="XM_016863699.2"/>
</dbReference>
<dbReference type="RefSeq" id="XP_016724533.1">
    <property type="nucleotide sequence ID" value="XM_016869044.2"/>
</dbReference>
<dbReference type="SMR" id="P09443"/>
<dbReference type="STRING" id="3635.P09443"/>
<dbReference type="PaxDb" id="3635-P09443"/>
<dbReference type="GeneID" id="107931767"/>
<dbReference type="GeneID" id="107936340"/>
<dbReference type="KEGG" id="ghi:107931767"/>
<dbReference type="KEGG" id="ghi:107936340"/>
<dbReference type="OMA" id="DESKFRM"/>
<dbReference type="OrthoDB" id="27780at41938"/>
<dbReference type="Proteomes" id="UP000189702">
    <property type="component" value="Unplaced"/>
</dbReference>
<dbReference type="GO" id="GO:0009737">
    <property type="term" value="P:response to abscisic acid"/>
    <property type="evidence" value="ECO:0000318"/>
    <property type="project" value="GO_Central"/>
</dbReference>
<dbReference type="InterPro" id="IPR038956">
    <property type="entry name" value="LEA_5"/>
</dbReference>
<dbReference type="InterPro" id="IPR022377">
    <property type="entry name" value="Sm_Hydphi_plant_seed_CS"/>
</dbReference>
<dbReference type="InterPro" id="IPR000389">
    <property type="entry name" value="Small_hydrophilic_seed_prot"/>
</dbReference>
<dbReference type="PANTHER" id="PTHR34671">
    <property type="entry name" value="EM-LIKE PROTEIN GEA1"/>
    <property type="match status" value="1"/>
</dbReference>
<dbReference type="PANTHER" id="PTHR34671:SF11">
    <property type="entry name" value="EM-LIKE PROTEIN GEA1"/>
    <property type="match status" value="1"/>
</dbReference>
<dbReference type="Pfam" id="PF00477">
    <property type="entry name" value="LEA_5"/>
    <property type="match status" value="1"/>
</dbReference>
<dbReference type="PROSITE" id="PS00431">
    <property type="entry name" value="SMALL_HYDR_PLANT_SEED"/>
    <property type="match status" value="1"/>
</dbReference>
<comment type="function">
    <text>LEA proteins are late embryonic proteins abundant in higher plant seed embryos. There are two subsets of LEA proteins (5a and 5b), the first ones are expressed when the cotyledon weight reach 80 mg and the second set are expressed above 100 mg. The function of those proteins is not known.</text>
</comment>
<comment type="induction">
    <text>By abscisic acid (ABA).</text>
</comment>
<comment type="miscellaneous">
    <text>This is a SET 5b protein.</text>
</comment>
<comment type="similarity">
    <text evidence="2">Belongs to the small hydrophilic plant seed protein family.</text>
</comment>
<accession>P09443</accession>
<sequence>MASEQYQAMRNAPQEEKEELDARAKQGETVVPGGTRGKSLDAQINLAEGRHKGGETRKQQLGTEGYQEMGRKGGLSNSDMSGGERAADEGVTIDESKFRTKN</sequence>
<evidence type="ECO:0000256" key="1">
    <source>
        <dbReference type="SAM" id="MobiDB-lite"/>
    </source>
</evidence>
<evidence type="ECO:0000305" key="2"/>
<name>LE19_GOSHI</name>
<reference key="1">
    <citation type="journal article" date="1988" name="Plant Mol. Biol.">
        <title>Sequence and characterization of 6 Lea proteins and their genes from cotton.</title>
        <authorList>
            <person name="Baker J."/>
            <person name="Steele C."/>
            <person name="Dure L. III"/>
        </authorList>
        <dbReference type="AGRICOLA" id="IND92000052"/>
    </citation>
    <scope>NUCLEOTIDE SEQUENCE</scope>
    <source>
        <strain>cv. Coker 201</strain>
        <tissue>Seed</tissue>
    </source>
</reference>
<reference key="2">
    <citation type="submission" date="1992-01" db="UniProtKB">
        <authorList>
            <person name="Dure L. III"/>
        </authorList>
    </citation>
    <scope>SEQUENCE REVISION</scope>
</reference>
<reference key="3">
    <citation type="submission" date="1991-10" db="EMBL/GenBank/DDBJ databases">
        <title>Sequence of Lea4 (D19) from Gossypium hirsutum: the A-genome alloallele, the D-genome alloallele mRNA, and the correct sequence of their proteins.</title>
        <authorList>
            <person name="Galau G.A."/>
            <person name="Wang H.Y."/>
            <person name="Hughes D.W."/>
        </authorList>
    </citation>
    <scope>NUCLEOTIDE SEQUENCE</scope>
</reference>